<organism>
    <name type="scientific">Neisseria gonorrhoeae (strain ATCC 700825 / FA 1090)</name>
    <dbReference type="NCBI Taxonomy" id="242231"/>
    <lineage>
        <taxon>Bacteria</taxon>
        <taxon>Pseudomonadati</taxon>
        <taxon>Pseudomonadota</taxon>
        <taxon>Betaproteobacteria</taxon>
        <taxon>Neisseriales</taxon>
        <taxon>Neisseriaceae</taxon>
        <taxon>Neisseria</taxon>
    </lineage>
</organism>
<keyword id="KW-1003">Cell membrane</keyword>
<keyword id="KW-0285">Flavoprotein</keyword>
<keyword id="KW-0288">FMN</keyword>
<keyword id="KW-0472">Membrane</keyword>
<keyword id="KW-0560">Oxidoreductase</keyword>
<keyword id="KW-0665">Pyrimidine biosynthesis</keyword>
<keyword id="KW-1185">Reference proteome</keyword>
<gene>
    <name evidence="1" type="primary">pyrD</name>
    <name type="ordered locus">NGO_1761</name>
</gene>
<evidence type="ECO:0000255" key="1">
    <source>
        <dbReference type="HAMAP-Rule" id="MF_00225"/>
    </source>
</evidence>
<comment type="function">
    <text evidence="1">Catalyzes the conversion of dihydroorotate to orotate with quinone as electron acceptor.</text>
</comment>
<comment type="catalytic activity">
    <reaction evidence="1">
        <text>(S)-dihydroorotate + a quinone = orotate + a quinol</text>
        <dbReference type="Rhea" id="RHEA:30187"/>
        <dbReference type="ChEBI" id="CHEBI:24646"/>
        <dbReference type="ChEBI" id="CHEBI:30839"/>
        <dbReference type="ChEBI" id="CHEBI:30864"/>
        <dbReference type="ChEBI" id="CHEBI:132124"/>
        <dbReference type="EC" id="1.3.5.2"/>
    </reaction>
</comment>
<comment type="cofactor">
    <cofactor evidence="1">
        <name>FMN</name>
        <dbReference type="ChEBI" id="CHEBI:58210"/>
    </cofactor>
    <text evidence="1">Binds 1 FMN per subunit.</text>
</comment>
<comment type="pathway">
    <text evidence="1">Pyrimidine metabolism; UMP biosynthesis via de novo pathway; orotate from (S)-dihydroorotate (quinone route): step 1/1.</text>
</comment>
<comment type="subunit">
    <text evidence="1">Monomer.</text>
</comment>
<comment type="subcellular location">
    <subcellularLocation>
        <location evidence="1">Cell membrane</location>
        <topology evidence="1">Peripheral membrane protein</topology>
    </subcellularLocation>
</comment>
<comment type="similarity">
    <text evidence="1">Belongs to the dihydroorotate dehydrogenase family. Type 2 subfamily.</text>
</comment>
<accession>Q5F605</accession>
<name>PYRD_NEIG1</name>
<dbReference type="EC" id="1.3.5.2" evidence="1"/>
<dbReference type="EMBL" id="AE004969">
    <property type="protein sequence ID" value="AAW90382.1"/>
    <property type="molecule type" value="Genomic_DNA"/>
</dbReference>
<dbReference type="RefSeq" id="WP_003689966.1">
    <property type="nucleotide sequence ID" value="NC_002946.2"/>
</dbReference>
<dbReference type="RefSeq" id="YP_208794.1">
    <property type="nucleotide sequence ID" value="NC_002946.2"/>
</dbReference>
<dbReference type="SMR" id="Q5F605"/>
<dbReference type="STRING" id="242231.NGO_1761"/>
<dbReference type="KEGG" id="ngo:NGO_1761"/>
<dbReference type="PATRIC" id="fig|242231.10.peg.2108"/>
<dbReference type="HOGENOM" id="CLU_013640_2_0_4"/>
<dbReference type="UniPathway" id="UPA00070">
    <property type="reaction ID" value="UER00946"/>
</dbReference>
<dbReference type="Proteomes" id="UP000000535">
    <property type="component" value="Chromosome"/>
</dbReference>
<dbReference type="GO" id="GO:0005737">
    <property type="term" value="C:cytoplasm"/>
    <property type="evidence" value="ECO:0007669"/>
    <property type="project" value="InterPro"/>
</dbReference>
<dbReference type="GO" id="GO:0005886">
    <property type="term" value="C:plasma membrane"/>
    <property type="evidence" value="ECO:0007669"/>
    <property type="project" value="UniProtKB-SubCell"/>
</dbReference>
<dbReference type="GO" id="GO:0106430">
    <property type="term" value="F:dihydroorotate dehydrogenase (quinone) activity"/>
    <property type="evidence" value="ECO:0007669"/>
    <property type="project" value="UniProtKB-EC"/>
</dbReference>
<dbReference type="GO" id="GO:0006207">
    <property type="term" value="P:'de novo' pyrimidine nucleobase biosynthetic process"/>
    <property type="evidence" value="ECO:0007669"/>
    <property type="project" value="InterPro"/>
</dbReference>
<dbReference type="GO" id="GO:0044205">
    <property type="term" value="P:'de novo' UMP biosynthetic process"/>
    <property type="evidence" value="ECO:0007669"/>
    <property type="project" value="UniProtKB-UniRule"/>
</dbReference>
<dbReference type="CDD" id="cd04738">
    <property type="entry name" value="DHOD_2_like"/>
    <property type="match status" value="1"/>
</dbReference>
<dbReference type="FunFam" id="3.20.20.70:FF:000028">
    <property type="entry name" value="Dihydroorotate dehydrogenase (quinone)"/>
    <property type="match status" value="1"/>
</dbReference>
<dbReference type="Gene3D" id="3.20.20.70">
    <property type="entry name" value="Aldolase class I"/>
    <property type="match status" value="1"/>
</dbReference>
<dbReference type="HAMAP" id="MF_00225">
    <property type="entry name" value="DHO_dh_type2"/>
    <property type="match status" value="1"/>
</dbReference>
<dbReference type="InterPro" id="IPR013785">
    <property type="entry name" value="Aldolase_TIM"/>
</dbReference>
<dbReference type="InterPro" id="IPR050074">
    <property type="entry name" value="DHO_dehydrogenase"/>
</dbReference>
<dbReference type="InterPro" id="IPR012135">
    <property type="entry name" value="Dihydroorotate_DH_1_2"/>
</dbReference>
<dbReference type="InterPro" id="IPR005719">
    <property type="entry name" value="Dihydroorotate_DH_2"/>
</dbReference>
<dbReference type="InterPro" id="IPR005720">
    <property type="entry name" value="Dihydroorotate_DH_cat"/>
</dbReference>
<dbReference type="InterPro" id="IPR001295">
    <property type="entry name" value="Dihydroorotate_DH_CS"/>
</dbReference>
<dbReference type="NCBIfam" id="NF003644">
    <property type="entry name" value="PRK05286.1-1"/>
    <property type="match status" value="1"/>
</dbReference>
<dbReference type="NCBIfam" id="NF003645">
    <property type="entry name" value="PRK05286.1-2"/>
    <property type="match status" value="1"/>
</dbReference>
<dbReference type="NCBIfam" id="NF003646">
    <property type="entry name" value="PRK05286.1-4"/>
    <property type="match status" value="1"/>
</dbReference>
<dbReference type="NCBIfam" id="NF003652">
    <property type="entry name" value="PRK05286.2-5"/>
    <property type="match status" value="1"/>
</dbReference>
<dbReference type="NCBIfam" id="TIGR01036">
    <property type="entry name" value="pyrD_sub2"/>
    <property type="match status" value="1"/>
</dbReference>
<dbReference type="PANTHER" id="PTHR48109:SF4">
    <property type="entry name" value="DIHYDROOROTATE DEHYDROGENASE (QUINONE), MITOCHONDRIAL"/>
    <property type="match status" value="1"/>
</dbReference>
<dbReference type="PANTHER" id="PTHR48109">
    <property type="entry name" value="DIHYDROOROTATE DEHYDROGENASE (QUINONE), MITOCHONDRIAL-RELATED"/>
    <property type="match status" value="1"/>
</dbReference>
<dbReference type="Pfam" id="PF01180">
    <property type="entry name" value="DHO_dh"/>
    <property type="match status" value="1"/>
</dbReference>
<dbReference type="PIRSF" id="PIRSF000164">
    <property type="entry name" value="DHO_oxidase"/>
    <property type="match status" value="1"/>
</dbReference>
<dbReference type="SUPFAM" id="SSF51395">
    <property type="entry name" value="FMN-linked oxidoreductases"/>
    <property type="match status" value="1"/>
</dbReference>
<dbReference type="PROSITE" id="PS00911">
    <property type="entry name" value="DHODEHASE_1"/>
    <property type="match status" value="1"/>
</dbReference>
<protein>
    <recommendedName>
        <fullName evidence="1">Dihydroorotate dehydrogenase (quinone)</fullName>
        <ecNumber evidence="1">1.3.5.2</ecNumber>
    </recommendedName>
    <alternativeName>
        <fullName evidence="1">DHOdehase</fullName>
        <shortName evidence="1">DHOD</shortName>
        <shortName evidence="1">DHODase</shortName>
    </alternativeName>
    <alternativeName>
        <fullName evidence="1">Dihydroorotate oxidase</fullName>
    </alternativeName>
</protein>
<sequence>MYPLARRILFALDAEKAHHFTLDALNTVYKLGLIPVTDNRTKPIKLMGMDLPNPVGLAAGLDKNGEYIDALGALGFGFLEIGTVTRNPQPGNPQPRLFRVPEHQGIINRMGFNNHGIDAMIRNIEKSKYQGVLGINIGKNAVTPIQNAADDYLICLEKAYAHASYITVNISSPNTKNLRALQGGGELGALLEALKNKQAQLAAAHGKYIPLAVKIAPDLDEAQIEDIARVVKSVEMDGIIATNTTIDKSSLGSHPLAGEQGGLSGFPVREKSNRVLKKLAEHIDGALPIIGVGGIMEGGDAAEKIRLGTTAVQVYSGLIYKGPALVKECLKALAR</sequence>
<proteinExistence type="inferred from homology"/>
<feature type="chain" id="PRO_0000148458" description="Dihydroorotate dehydrogenase (quinone)">
    <location>
        <begin position="1"/>
        <end position="335"/>
    </location>
</feature>
<feature type="active site" description="Nucleophile" evidence="1">
    <location>
        <position position="172"/>
    </location>
</feature>
<feature type="binding site" evidence="1">
    <location>
        <begin position="59"/>
        <end position="63"/>
    </location>
    <ligand>
        <name>FMN</name>
        <dbReference type="ChEBI" id="CHEBI:58210"/>
    </ligand>
</feature>
<feature type="binding site" evidence="1">
    <location>
        <position position="63"/>
    </location>
    <ligand>
        <name>substrate</name>
    </ligand>
</feature>
<feature type="binding site" evidence="1">
    <location>
        <position position="83"/>
    </location>
    <ligand>
        <name>FMN</name>
        <dbReference type="ChEBI" id="CHEBI:58210"/>
    </ligand>
</feature>
<feature type="binding site" evidence="1">
    <location>
        <begin position="108"/>
        <end position="112"/>
    </location>
    <ligand>
        <name>substrate</name>
    </ligand>
</feature>
<feature type="binding site" evidence="1">
    <location>
        <position position="136"/>
    </location>
    <ligand>
        <name>FMN</name>
        <dbReference type="ChEBI" id="CHEBI:58210"/>
    </ligand>
</feature>
<feature type="binding site" evidence="1">
    <location>
        <position position="169"/>
    </location>
    <ligand>
        <name>FMN</name>
        <dbReference type="ChEBI" id="CHEBI:58210"/>
    </ligand>
</feature>
<feature type="binding site" evidence="1">
    <location>
        <position position="169"/>
    </location>
    <ligand>
        <name>substrate</name>
    </ligand>
</feature>
<feature type="binding site" evidence="1">
    <location>
        <position position="174"/>
    </location>
    <ligand>
        <name>substrate</name>
    </ligand>
</feature>
<feature type="binding site" evidence="1">
    <location>
        <position position="214"/>
    </location>
    <ligand>
        <name>FMN</name>
        <dbReference type="ChEBI" id="CHEBI:58210"/>
    </ligand>
</feature>
<feature type="binding site" evidence="1">
    <location>
        <position position="242"/>
    </location>
    <ligand>
        <name>FMN</name>
        <dbReference type="ChEBI" id="CHEBI:58210"/>
    </ligand>
</feature>
<feature type="binding site" evidence="1">
    <location>
        <begin position="243"/>
        <end position="244"/>
    </location>
    <ligand>
        <name>substrate</name>
    </ligand>
</feature>
<feature type="binding site" evidence="1">
    <location>
        <position position="265"/>
    </location>
    <ligand>
        <name>FMN</name>
        <dbReference type="ChEBI" id="CHEBI:58210"/>
    </ligand>
</feature>
<feature type="binding site" evidence="1">
    <location>
        <position position="294"/>
    </location>
    <ligand>
        <name>FMN</name>
        <dbReference type="ChEBI" id="CHEBI:58210"/>
    </ligand>
</feature>
<feature type="binding site" evidence="1">
    <location>
        <begin position="315"/>
        <end position="316"/>
    </location>
    <ligand>
        <name>FMN</name>
        <dbReference type="ChEBI" id="CHEBI:58210"/>
    </ligand>
</feature>
<reference key="1">
    <citation type="submission" date="2003-03" db="EMBL/GenBank/DDBJ databases">
        <title>The complete genome sequence of Neisseria gonorrhoeae.</title>
        <authorList>
            <person name="Lewis L.A."/>
            <person name="Gillaspy A.F."/>
            <person name="McLaughlin R.E."/>
            <person name="Gipson M."/>
            <person name="Ducey T.F."/>
            <person name="Ownbey T."/>
            <person name="Hartman K."/>
            <person name="Nydick C."/>
            <person name="Carson M.B."/>
            <person name="Vaughn J."/>
            <person name="Thomson C."/>
            <person name="Song L."/>
            <person name="Lin S."/>
            <person name="Yuan X."/>
            <person name="Najar F."/>
            <person name="Zhan M."/>
            <person name="Ren Q."/>
            <person name="Zhu H."/>
            <person name="Qi S."/>
            <person name="Kenton S.M."/>
            <person name="Lai H."/>
            <person name="White J.D."/>
            <person name="Clifton S."/>
            <person name="Roe B.A."/>
            <person name="Dyer D.W."/>
        </authorList>
    </citation>
    <scope>NUCLEOTIDE SEQUENCE [LARGE SCALE GENOMIC DNA]</scope>
    <source>
        <strain>ATCC 700825 / FA 1090</strain>
    </source>
</reference>